<organism>
    <name type="scientific">Nocardioides sp. (strain ATCC BAA-499 / JS614)</name>
    <dbReference type="NCBI Taxonomy" id="196162"/>
    <lineage>
        <taxon>Bacteria</taxon>
        <taxon>Bacillati</taxon>
        <taxon>Actinomycetota</taxon>
        <taxon>Actinomycetes</taxon>
        <taxon>Propionibacteriales</taxon>
        <taxon>Nocardioidaceae</taxon>
        <taxon>Nocardioides</taxon>
    </lineage>
</organism>
<proteinExistence type="inferred from homology"/>
<evidence type="ECO:0000255" key="1">
    <source>
        <dbReference type="PROSITE-ProRule" id="PRU00520"/>
    </source>
</evidence>
<evidence type="ECO:0000305" key="2"/>
<name>ACYP_NOCSJ</name>
<feature type="chain" id="PRO_0000326761" description="Acylphosphatase">
    <location>
        <begin position="1"/>
        <end position="99"/>
    </location>
</feature>
<feature type="domain" description="Acylphosphatase-like" evidence="1">
    <location>
        <begin position="14"/>
        <end position="99"/>
    </location>
</feature>
<feature type="active site" evidence="1">
    <location>
        <position position="29"/>
    </location>
</feature>
<feature type="active site" evidence="1">
    <location>
        <position position="47"/>
    </location>
</feature>
<accession>A1SPV1</accession>
<gene>
    <name type="primary">acyP</name>
    <name type="ordered locus">Noca_4339</name>
</gene>
<sequence>MCGRPGDDGDMRSAVDVTVTGRVQGVSFRYYADREADRLGVAGWVRNEPDGTVAAHVEGDPGAVAAFVRWCHDGPRLAHVEQVDVRDGTDQGLRSFGVR</sequence>
<keyword id="KW-0378">Hydrolase</keyword>
<keyword id="KW-1185">Reference proteome</keyword>
<comment type="catalytic activity">
    <reaction>
        <text>an acyl phosphate + H2O = a carboxylate + phosphate + H(+)</text>
        <dbReference type="Rhea" id="RHEA:14965"/>
        <dbReference type="ChEBI" id="CHEBI:15377"/>
        <dbReference type="ChEBI" id="CHEBI:15378"/>
        <dbReference type="ChEBI" id="CHEBI:29067"/>
        <dbReference type="ChEBI" id="CHEBI:43474"/>
        <dbReference type="ChEBI" id="CHEBI:59918"/>
        <dbReference type="EC" id="3.6.1.7"/>
    </reaction>
</comment>
<comment type="similarity">
    <text evidence="2">Belongs to the acylphosphatase family.</text>
</comment>
<reference key="1">
    <citation type="submission" date="2006-12" db="EMBL/GenBank/DDBJ databases">
        <title>Complete sequence of chromosome 1 of Nocardioides sp. JS614.</title>
        <authorList>
            <person name="Copeland A."/>
            <person name="Lucas S."/>
            <person name="Lapidus A."/>
            <person name="Barry K."/>
            <person name="Detter J.C."/>
            <person name="Glavina del Rio T."/>
            <person name="Hammon N."/>
            <person name="Israni S."/>
            <person name="Dalin E."/>
            <person name="Tice H."/>
            <person name="Pitluck S."/>
            <person name="Thompson L.S."/>
            <person name="Brettin T."/>
            <person name="Bruce D."/>
            <person name="Han C."/>
            <person name="Tapia R."/>
            <person name="Schmutz J."/>
            <person name="Larimer F."/>
            <person name="Land M."/>
            <person name="Hauser L."/>
            <person name="Kyrpides N."/>
            <person name="Kim E."/>
            <person name="Mattes T."/>
            <person name="Gossett J."/>
            <person name="Richardson P."/>
        </authorList>
    </citation>
    <scope>NUCLEOTIDE SEQUENCE [LARGE SCALE GENOMIC DNA]</scope>
    <source>
        <strain>ATCC BAA-499 / JS614</strain>
    </source>
</reference>
<dbReference type="EC" id="3.6.1.7"/>
<dbReference type="EMBL" id="CP000509">
    <property type="protein sequence ID" value="ABL83836.1"/>
    <property type="molecule type" value="Genomic_DNA"/>
</dbReference>
<dbReference type="SMR" id="A1SPV1"/>
<dbReference type="STRING" id="196162.Noca_4339"/>
<dbReference type="KEGG" id="nca:Noca_4339"/>
<dbReference type="eggNOG" id="COG1254">
    <property type="taxonomic scope" value="Bacteria"/>
</dbReference>
<dbReference type="HOGENOM" id="CLU_141932_3_2_11"/>
<dbReference type="OrthoDB" id="3182027at2"/>
<dbReference type="Proteomes" id="UP000000640">
    <property type="component" value="Chromosome"/>
</dbReference>
<dbReference type="GO" id="GO:0003998">
    <property type="term" value="F:acylphosphatase activity"/>
    <property type="evidence" value="ECO:0007669"/>
    <property type="project" value="UniProtKB-EC"/>
</dbReference>
<dbReference type="Gene3D" id="3.30.70.100">
    <property type="match status" value="1"/>
</dbReference>
<dbReference type="InterPro" id="IPR020456">
    <property type="entry name" value="Acylphosphatase"/>
</dbReference>
<dbReference type="InterPro" id="IPR001792">
    <property type="entry name" value="Acylphosphatase-like_dom"/>
</dbReference>
<dbReference type="InterPro" id="IPR036046">
    <property type="entry name" value="Acylphosphatase-like_dom_sf"/>
</dbReference>
<dbReference type="InterPro" id="IPR017968">
    <property type="entry name" value="Acylphosphatase_CS"/>
</dbReference>
<dbReference type="PANTHER" id="PTHR47268">
    <property type="entry name" value="ACYLPHOSPHATASE"/>
    <property type="match status" value="1"/>
</dbReference>
<dbReference type="PANTHER" id="PTHR47268:SF4">
    <property type="entry name" value="ACYLPHOSPHATASE"/>
    <property type="match status" value="1"/>
</dbReference>
<dbReference type="Pfam" id="PF00708">
    <property type="entry name" value="Acylphosphatase"/>
    <property type="match status" value="1"/>
</dbReference>
<dbReference type="PRINTS" id="PR00112">
    <property type="entry name" value="ACYLPHPHTASE"/>
</dbReference>
<dbReference type="SUPFAM" id="SSF54975">
    <property type="entry name" value="Acylphosphatase/BLUF domain-like"/>
    <property type="match status" value="1"/>
</dbReference>
<dbReference type="PROSITE" id="PS00150">
    <property type="entry name" value="ACYLPHOSPHATASE_1"/>
    <property type="match status" value="1"/>
</dbReference>
<dbReference type="PROSITE" id="PS00151">
    <property type="entry name" value="ACYLPHOSPHATASE_2"/>
    <property type="match status" value="1"/>
</dbReference>
<dbReference type="PROSITE" id="PS51160">
    <property type="entry name" value="ACYLPHOSPHATASE_3"/>
    <property type="match status" value="1"/>
</dbReference>
<protein>
    <recommendedName>
        <fullName>Acylphosphatase</fullName>
        <ecNumber>3.6.1.7</ecNumber>
    </recommendedName>
    <alternativeName>
        <fullName>Acylphosphate phosphohydrolase</fullName>
    </alternativeName>
</protein>